<gene>
    <name evidence="1" type="primary">lipA</name>
    <name type="ordered locus">Daci_0410</name>
</gene>
<organism>
    <name type="scientific">Delftia acidovorans (strain DSM 14801 / SPH-1)</name>
    <dbReference type="NCBI Taxonomy" id="398578"/>
    <lineage>
        <taxon>Bacteria</taxon>
        <taxon>Pseudomonadati</taxon>
        <taxon>Pseudomonadota</taxon>
        <taxon>Betaproteobacteria</taxon>
        <taxon>Burkholderiales</taxon>
        <taxon>Comamonadaceae</taxon>
        <taxon>Delftia</taxon>
    </lineage>
</organism>
<name>LIPA_DELAS</name>
<keyword id="KW-0004">4Fe-4S</keyword>
<keyword id="KW-0963">Cytoplasm</keyword>
<keyword id="KW-0408">Iron</keyword>
<keyword id="KW-0411">Iron-sulfur</keyword>
<keyword id="KW-0479">Metal-binding</keyword>
<keyword id="KW-1185">Reference proteome</keyword>
<keyword id="KW-0949">S-adenosyl-L-methionine</keyword>
<keyword id="KW-0808">Transferase</keyword>
<evidence type="ECO:0000255" key="1">
    <source>
        <dbReference type="HAMAP-Rule" id="MF_00206"/>
    </source>
</evidence>
<evidence type="ECO:0000255" key="2">
    <source>
        <dbReference type="PROSITE-ProRule" id="PRU01266"/>
    </source>
</evidence>
<feature type="chain" id="PRO_1000099600" description="Lipoyl synthase">
    <location>
        <begin position="1"/>
        <end position="326"/>
    </location>
</feature>
<feature type="domain" description="Radical SAM core" evidence="2">
    <location>
        <begin position="85"/>
        <end position="303"/>
    </location>
</feature>
<feature type="binding site" evidence="1">
    <location>
        <position position="74"/>
    </location>
    <ligand>
        <name>[4Fe-4S] cluster</name>
        <dbReference type="ChEBI" id="CHEBI:49883"/>
        <label>1</label>
    </ligand>
</feature>
<feature type="binding site" evidence="1">
    <location>
        <position position="79"/>
    </location>
    <ligand>
        <name>[4Fe-4S] cluster</name>
        <dbReference type="ChEBI" id="CHEBI:49883"/>
        <label>1</label>
    </ligand>
</feature>
<feature type="binding site" evidence="1">
    <location>
        <position position="85"/>
    </location>
    <ligand>
        <name>[4Fe-4S] cluster</name>
        <dbReference type="ChEBI" id="CHEBI:49883"/>
        <label>1</label>
    </ligand>
</feature>
<feature type="binding site" evidence="1">
    <location>
        <position position="100"/>
    </location>
    <ligand>
        <name>[4Fe-4S] cluster</name>
        <dbReference type="ChEBI" id="CHEBI:49883"/>
        <label>2</label>
        <note>4Fe-4S-S-AdoMet</note>
    </ligand>
</feature>
<feature type="binding site" evidence="1">
    <location>
        <position position="104"/>
    </location>
    <ligand>
        <name>[4Fe-4S] cluster</name>
        <dbReference type="ChEBI" id="CHEBI:49883"/>
        <label>2</label>
        <note>4Fe-4S-S-AdoMet</note>
    </ligand>
</feature>
<feature type="binding site" evidence="1">
    <location>
        <position position="107"/>
    </location>
    <ligand>
        <name>[4Fe-4S] cluster</name>
        <dbReference type="ChEBI" id="CHEBI:49883"/>
        <label>2</label>
        <note>4Fe-4S-S-AdoMet</note>
    </ligand>
</feature>
<feature type="binding site" evidence="1">
    <location>
        <position position="314"/>
    </location>
    <ligand>
        <name>[4Fe-4S] cluster</name>
        <dbReference type="ChEBI" id="CHEBI:49883"/>
        <label>1</label>
    </ligand>
</feature>
<accession>A9BPT7</accession>
<sequence>MTTNTVVREAQSQAEYNPLAKQKAAAKLSRIPIKVEHGEALKKPDWIRVKAGSPTTRFYEIKDILRANKLHTVCEEASCPNIGECFGKGTATFMIMGDKCTRRCPFCDVGHGRPDPLDTNEPLNLAKTIAELRLKYVVITSVDRDDLRDGGSGHFVECIKNIRELSPLTQIEILVPDFRGRDDRALEILKAAPPDVMNHNLETAPRLYKEARPGSDYQFSLNLLKKFKALHPKVPTKSGIMVGLGETDEEILQVMRDMRAHDIDMLTIGQYLAPSNSHLPVRRYVHPDTFKMFEEEAYKMGFTHAAVGAMVRSSYHADQQAHAAGV</sequence>
<protein>
    <recommendedName>
        <fullName evidence="1">Lipoyl synthase</fullName>
        <ecNumber evidence="1">2.8.1.8</ecNumber>
    </recommendedName>
    <alternativeName>
        <fullName evidence="1">Lip-syn</fullName>
        <shortName evidence="1">LS</shortName>
    </alternativeName>
    <alternativeName>
        <fullName evidence="1">Lipoate synthase</fullName>
    </alternativeName>
    <alternativeName>
        <fullName evidence="1">Lipoic acid synthase</fullName>
    </alternativeName>
    <alternativeName>
        <fullName evidence="1">Sulfur insertion protein LipA</fullName>
    </alternativeName>
</protein>
<comment type="function">
    <text evidence="1">Catalyzes the radical-mediated insertion of two sulfur atoms into the C-6 and C-8 positions of the octanoyl moiety bound to the lipoyl domains of lipoate-dependent enzymes, thereby converting the octanoylated domains into lipoylated derivatives.</text>
</comment>
<comment type="catalytic activity">
    <reaction evidence="1">
        <text>[[Fe-S] cluster scaffold protein carrying a second [4Fe-4S](2+) cluster] + N(6)-octanoyl-L-lysyl-[protein] + 2 oxidized [2Fe-2S]-[ferredoxin] + 2 S-adenosyl-L-methionine + 4 H(+) = [[Fe-S] cluster scaffold protein] + N(6)-[(R)-dihydrolipoyl]-L-lysyl-[protein] + 4 Fe(3+) + 2 hydrogen sulfide + 2 5'-deoxyadenosine + 2 L-methionine + 2 reduced [2Fe-2S]-[ferredoxin]</text>
        <dbReference type="Rhea" id="RHEA:16585"/>
        <dbReference type="Rhea" id="RHEA-COMP:9928"/>
        <dbReference type="Rhea" id="RHEA-COMP:10000"/>
        <dbReference type="Rhea" id="RHEA-COMP:10001"/>
        <dbReference type="Rhea" id="RHEA-COMP:10475"/>
        <dbReference type="Rhea" id="RHEA-COMP:14568"/>
        <dbReference type="Rhea" id="RHEA-COMP:14569"/>
        <dbReference type="ChEBI" id="CHEBI:15378"/>
        <dbReference type="ChEBI" id="CHEBI:17319"/>
        <dbReference type="ChEBI" id="CHEBI:29034"/>
        <dbReference type="ChEBI" id="CHEBI:29919"/>
        <dbReference type="ChEBI" id="CHEBI:33722"/>
        <dbReference type="ChEBI" id="CHEBI:33737"/>
        <dbReference type="ChEBI" id="CHEBI:33738"/>
        <dbReference type="ChEBI" id="CHEBI:57844"/>
        <dbReference type="ChEBI" id="CHEBI:59789"/>
        <dbReference type="ChEBI" id="CHEBI:78809"/>
        <dbReference type="ChEBI" id="CHEBI:83100"/>
        <dbReference type="EC" id="2.8.1.8"/>
    </reaction>
</comment>
<comment type="cofactor">
    <cofactor evidence="1">
        <name>[4Fe-4S] cluster</name>
        <dbReference type="ChEBI" id="CHEBI:49883"/>
    </cofactor>
    <text evidence="1">Binds 2 [4Fe-4S] clusters per subunit. One cluster is coordinated with 3 cysteines and an exchangeable S-adenosyl-L-methionine.</text>
</comment>
<comment type="pathway">
    <text evidence="1">Protein modification; protein lipoylation via endogenous pathway; protein N(6)-(lipoyl)lysine from octanoyl-[acyl-carrier-protein]: step 2/2.</text>
</comment>
<comment type="subcellular location">
    <subcellularLocation>
        <location evidence="1">Cytoplasm</location>
    </subcellularLocation>
</comment>
<comment type="similarity">
    <text evidence="1">Belongs to the radical SAM superfamily. Lipoyl synthase family.</text>
</comment>
<reference key="1">
    <citation type="submission" date="2007-11" db="EMBL/GenBank/DDBJ databases">
        <title>Complete sequence of Delftia acidovorans DSM 14801 / SPH-1.</title>
        <authorList>
            <person name="Copeland A."/>
            <person name="Lucas S."/>
            <person name="Lapidus A."/>
            <person name="Barry K."/>
            <person name="Glavina del Rio T."/>
            <person name="Dalin E."/>
            <person name="Tice H."/>
            <person name="Pitluck S."/>
            <person name="Lowry S."/>
            <person name="Clum A."/>
            <person name="Schmutz J."/>
            <person name="Larimer F."/>
            <person name="Land M."/>
            <person name="Hauser L."/>
            <person name="Kyrpides N."/>
            <person name="Kim E."/>
            <person name="Schleheck D."/>
            <person name="Richardson P."/>
        </authorList>
    </citation>
    <scope>NUCLEOTIDE SEQUENCE [LARGE SCALE GENOMIC DNA]</scope>
    <source>
        <strain>DSM 14801 / SPH-1</strain>
    </source>
</reference>
<dbReference type="EC" id="2.8.1.8" evidence="1"/>
<dbReference type="EMBL" id="CP000884">
    <property type="protein sequence ID" value="ABX33056.1"/>
    <property type="molecule type" value="Genomic_DNA"/>
</dbReference>
<dbReference type="RefSeq" id="WP_012202348.1">
    <property type="nucleotide sequence ID" value="NC_010002.1"/>
</dbReference>
<dbReference type="SMR" id="A9BPT7"/>
<dbReference type="STRING" id="398578.Daci_0410"/>
<dbReference type="GeneID" id="24118434"/>
<dbReference type="KEGG" id="dac:Daci_0410"/>
<dbReference type="eggNOG" id="COG0320">
    <property type="taxonomic scope" value="Bacteria"/>
</dbReference>
<dbReference type="HOGENOM" id="CLU_033144_2_1_4"/>
<dbReference type="UniPathway" id="UPA00538">
    <property type="reaction ID" value="UER00593"/>
</dbReference>
<dbReference type="Proteomes" id="UP000000784">
    <property type="component" value="Chromosome"/>
</dbReference>
<dbReference type="GO" id="GO:0005737">
    <property type="term" value="C:cytoplasm"/>
    <property type="evidence" value="ECO:0007669"/>
    <property type="project" value="UniProtKB-SubCell"/>
</dbReference>
<dbReference type="GO" id="GO:0051539">
    <property type="term" value="F:4 iron, 4 sulfur cluster binding"/>
    <property type="evidence" value="ECO:0007669"/>
    <property type="project" value="UniProtKB-UniRule"/>
</dbReference>
<dbReference type="GO" id="GO:0016992">
    <property type="term" value="F:lipoate synthase activity"/>
    <property type="evidence" value="ECO:0007669"/>
    <property type="project" value="UniProtKB-UniRule"/>
</dbReference>
<dbReference type="GO" id="GO:0046872">
    <property type="term" value="F:metal ion binding"/>
    <property type="evidence" value="ECO:0007669"/>
    <property type="project" value="UniProtKB-KW"/>
</dbReference>
<dbReference type="CDD" id="cd01335">
    <property type="entry name" value="Radical_SAM"/>
    <property type="match status" value="1"/>
</dbReference>
<dbReference type="FunFam" id="3.20.20.70:FF:000040">
    <property type="entry name" value="Lipoyl synthase"/>
    <property type="match status" value="1"/>
</dbReference>
<dbReference type="Gene3D" id="3.20.20.70">
    <property type="entry name" value="Aldolase class I"/>
    <property type="match status" value="1"/>
</dbReference>
<dbReference type="HAMAP" id="MF_00206">
    <property type="entry name" value="Lipoyl_synth"/>
    <property type="match status" value="1"/>
</dbReference>
<dbReference type="InterPro" id="IPR013785">
    <property type="entry name" value="Aldolase_TIM"/>
</dbReference>
<dbReference type="InterPro" id="IPR006638">
    <property type="entry name" value="Elp3/MiaA/NifB-like_rSAM"/>
</dbReference>
<dbReference type="InterPro" id="IPR031691">
    <property type="entry name" value="LIAS_N"/>
</dbReference>
<dbReference type="InterPro" id="IPR003698">
    <property type="entry name" value="Lipoyl_synth"/>
</dbReference>
<dbReference type="InterPro" id="IPR007197">
    <property type="entry name" value="rSAM"/>
</dbReference>
<dbReference type="NCBIfam" id="TIGR00510">
    <property type="entry name" value="lipA"/>
    <property type="match status" value="1"/>
</dbReference>
<dbReference type="NCBIfam" id="NF004019">
    <property type="entry name" value="PRK05481.1"/>
    <property type="match status" value="1"/>
</dbReference>
<dbReference type="NCBIfam" id="NF009544">
    <property type="entry name" value="PRK12928.1"/>
    <property type="match status" value="1"/>
</dbReference>
<dbReference type="PANTHER" id="PTHR10949">
    <property type="entry name" value="LIPOYL SYNTHASE"/>
    <property type="match status" value="1"/>
</dbReference>
<dbReference type="PANTHER" id="PTHR10949:SF0">
    <property type="entry name" value="LIPOYL SYNTHASE, MITOCHONDRIAL"/>
    <property type="match status" value="1"/>
</dbReference>
<dbReference type="Pfam" id="PF16881">
    <property type="entry name" value="LIAS_N"/>
    <property type="match status" value="1"/>
</dbReference>
<dbReference type="Pfam" id="PF04055">
    <property type="entry name" value="Radical_SAM"/>
    <property type="match status" value="1"/>
</dbReference>
<dbReference type="PIRSF" id="PIRSF005963">
    <property type="entry name" value="Lipoyl_synth"/>
    <property type="match status" value="1"/>
</dbReference>
<dbReference type="SFLD" id="SFLDF00271">
    <property type="entry name" value="lipoyl_synthase"/>
    <property type="match status" value="1"/>
</dbReference>
<dbReference type="SFLD" id="SFLDS00029">
    <property type="entry name" value="Radical_SAM"/>
    <property type="match status" value="1"/>
</dbReference>
<dbReference type="SMART" id="SM00729">
    <property type="entry name" value="Elp3"/>
    <property type="match status" value="1"/>
</dbReference>
<dbReference type="SUPFAM" id="SSF102114">
    <property type="entry name" value="Radical SAM enzymes"/>
    <property type="match status" value="1"/>
</dbReference>
<dbReference type="PROSITE" id="PS51918">
    <property type="entry name" value="RADICAL_SAM"/>
    <property type="match status" value="1"/>
</dbReference>
<proteinExistence type="inferred from homology"/>